<name>MMDC_VEIPA</name>
<keyword id="KW-0092">Biotin</keyword>
<keyword id="KW-1003">Cell membrane</keyword>
<keyword id="KW-0903">Direct protein sequencing</keyword>
<keyword id="KW-0406">Ion transport</keyword>
<keyword id="KW-0472">Membrane</keyword>
<keyword id="KW-0915">Sodium</keyword>
<keyword id="KW-0739">Sodium transport</keyword>
<keyword id="KW-1278">Translocase</keyword>
<keyword id="KW-0813">Transport</keyword>
<protein>
    <recommendedName>
        <fullName evidence="13">Methylmalonyl-CoA decarboxylase subunit gamma</fullName>
        <ecNumber evidence="4 7 9">7.2.4.3</ecNumber>
    </recommendedName>
</protein>
<gene>
    <name evidence="12" type="primary">mmdC</name>
    <name evidence="16" type="ORF">D3219_04680</name>
    <name evidence="15" type="ORF">DWV36_05390</name>
    <name evidence="14" type="ORF">HMPREF1865_00703</name>
</gene>
<evidence type="ECO:0000255" key="1">
    <source>
        <dbReference type="PROSITE-ProRule" id="PRU01066"/>
    </source>
</evidence>
<evidence type="ECO:0000256" key="2">
    <source>
        <dbReference type="SAM" id="MobiDB-lite"/>
    </source>
</evidence>
<evidence type="ECO:0000269" key="3">
    <source>
    </source>
</evidence>
<evidence type="ECO:0000269" key="4">
    <source>
    </source>
</evidence>
<evidence type="ECO:0000269" key="5">
    <source>
    </source>
</evidence>
<evidence type="ECO:0000269" key="6">
    <source>
    </source>
</evidence>
<evidence type="ECO:0000269" key="7">
    <source>
    </source>
</evidence>
<evidence type="ECO:0000269" key="8">
    <source>
    </source>
</evidence>
<evidence type="ECO:0000269" key="9">
    <source>
    </source>
</evidence>
<evidence type="ECO:0000269" key="10">
    <source>
    </source>
</evidence>
<evidence type="ECO:0000269" key="11">
    <source ref="8"/>
</evidence>
<evidence type="ECO:0000303" key="12">
    <source>
    </source>
</evidence>
<evidence type="ECO:0000305" key="13"/>
<evidence type="ECO:0000312" key="14">
    <source>
        <dbReference type="EMBL" id="KXB86195.1"/>
    </source>
</evidence>
<evidence type="ECO:0000312" key="15">
    <source>
        <dbReference type="EMBL" id="RGX04057.1"/>
    </source>
</evidence>
<evidence type="ECO:0000312" key="16">
    <source>
        <dbReference type="EMBL" id="RIW10324.1"/>
    </source>
</evidence>
<comment type="function">
    <text evidence="3 4 5 7 8 9">Biotin-containing subunit of the sodium ion pump methylmalonyl-CoA decarboxylase, which converts the chemical energy of a decarboxylation reaction into an electrochemical gradient of Na(+) ions across the cytoplasmic membrane, thereby creating a sodium ion motive force that is used for ATP synthesis (PubMed:1991479, PubMed:2920730, PubMed:3609308, PubMed:6852015, PubMed:7070502, PubMed:7601825). Can also convert malonyl-CoA into acetyl-CoA (PubMed:2920730, PubMed:6852015).</text>
</comment>
<comment type="catalytic activity">
    <reaction evidence="4 7 9">
        <text>(S)-methylmalonyl-CoA + Na(+)(in) + H(+)(out) = propanoyl-CoA + Na(+)(out) + CO2</text>
        <dbReference type="Rhea" id="RHEA:21396"/>
        <dbReference type="ChEBI" id="CHEBI:15378"/>
        <dbReference type="ChEBI" id="CHEBI:16526"/>
        <dbReference type="ChEBI" id="CHEBI:29101"/>
        <dbReference type="ChEBI" id="CHEBI:57327"/>
        <dbReference type="ChEBI" id="CHEBI:57392"/>
        <dbReference type="EC" id="7.2.4.3"/>
    </reaction>
</comment>
<comment type="cofactor">
    <cofactor evidence="1">
        <name>biotin</name>
        <dbReference type="ChEBI" id="CHEBI:57586"/>
    </cofactor>
</comment>
<comment type="activity regulation">
    <text evidence="7 9">Completely inhibited by avidin.</text>
</comment>
<comment type="subunit">
    <text evidence="9 10">The methylmalonyl-CoA decarboxylase is composed of five subunits: the carboxyltransferase alpha subunit (MmdA), the tunnel beta subunit (MmdB), the biotin-containing gamma subunit (MmdC), and the delta (MmdD) and epsilon (MmdE) subunits.</text>
</comment>
<comment type="subcellular location">
    <subcellularLocation>
        <location evidence="6 7 8 11">Cell membrane</location>
    </subcellularLocation>
</comment>
<organism>
    <name type="scientific">Veillonella parvula</name>
    <name type="common">Staphylococcus parvulus</name>
    <dbReference type="NCBI Taxonomy" id="29466"/>
    <lineage>
        <taxon>Bacteria</taxon>
        <taxon>Bacillati</taxon>
        <taxon>Bacillota</taxon>
        <taxon>Negativicutes</taxon>
        <taxon>Veillonellales</taxon>
        <taxon>Veillonellaceae</taxon>
        <taxon>Veillonella</taxon>
    </lineage>
</organism>
<proteinExistence type="evidence at protein level"/>
<accession>Q57111</accession>
<dbReference type="EC" id="7.2.4.3" evidence="4 7 9"/>
<dbReference type="EMBL" id="L22208">
    <property type="protein sequence ID" value="AAC36823.1"/>
    <property type="molecule type" value="Unassigned_DNA"/>
</dbReference>
<dbReference type="EMBL" id="Z24754">
    <property type="protein sequence ID" value="CAA80875.1"/>
    <property type="molecule type" value="Genomic_DNA"/>
</dbReference>
<dbReference type="EMBL" id="KQ960785">
    <property type="protein sequence ID" value="KXB86195.1"/>
    <property type="molecule type" value="Genomic_DNA"/>
</dbReference>
<dbReference type="EMBL" id="QSBH01000003">
    <property type="protein sequence ID" value="RGX04057.1"/>
    <property type="molecule type" value="Genomic_DNA"/>
</dbReference>
<dbReference type="EMBL" id="QYAA01000006">
    <property type="protein sequence ID" value="RIW10324.1"/>
    <property type="molecule type" value="Genomic_DNA"/>
</dbReference>
<dbReference type="PIR" id="D49094">
    <property type="entry name" value="D49094"/>
</dbReference>
<dbReference type="RefSeq" id="WP_004696481.1">
    <property type="nucleotide sequence ID" value="NZ_AP031417.1"/>
</dbReference>
<dbReference type="SMR" id="Q57111"/>
<dbReference type="STRING" id="29466.GCA_002005185_01892"/>
<dbReference type="TCDB" id="3.B.1.1.2">
    <property type="family name" value="the na(+)-transporting carboxylic acid decarboxylase (nat-dc) family"/>
</dbReference>
<dbReference type="PATRIC" id="fig|29466.15.peg.691"/>
<dbReference type="BioCyc" id="MetaCyc:MONOMER-21719"/>
<dbReference type="GO" id="GO:0005886">
    <property type="term" value="C:plasma membrane"/>
    <property type="evidence" value="ECO:0007669"/>
    <property type="project" value="UniProtKB-SubCell"/>
</dbReference>
<dbReference type="GO" id="GO:0006814">
    <property type="term" value="P:sodium ion transport"/>
    <property type="evidence" value="ECO:0007669"/>
    <property type="project" value="UniProtKB-KW"/>
</dbReference>
<dbReference type="CDD" id="cd06850">
    <property type="entry name" value="biotinyl_domain"/>
    <property type="match status" value="1"/>
</dbReference>
<dbReference type="FunFam" id="2.40.50.100:FF:000003">
    <property type="entry name" value="Acetyl-CoA carboxylase biotin carboxyl carrier protein"/>
    <property type="match status" value="1"/>
</dbReference>
<dbReference type="Gene3D" id="2.40.50.100">
    <property type="match status" value="1"/>
</dbReference>
<dbReference type="InterPro" id="IPR001882">
    <property type="entry name" value="Biotin_BS"/>
</dbReference>
<dbReference type="InterPro" id="IPR050709">
    <property type="entry name" value="Biotin_Carboxyl_Carrier/Decarb"/>
</dbReference>
<dbReference type="InterPro" id="IPR000089">
    <property type="entry name" value="Biotin_lipoyl"/>
</dbReference>
<dbReference type="InterPro" id="IPR011053">
    <property type="entry name" value="Single_hybrid_motif"/>
</dbReference>
<dbReference type="PANTHER" id="PTHR45266">
    <property type="entry name" value="OXALOACETATE DECARBOXYLASE ALPHA CHAIN"/>
    <property type="match status" value="1"/>
</dbReference>
<dbReference type="PANTHER" id="PTHR45266:SF3">
    <property type="entry name" value="OXALOACETATE DECARBOXYLASE ALPHA CHAIN"/>
    <property type="match status" value="1"/>
</dbReference>
<dbReference type="Pfam" id="PF00364">
    <property type="entry name" value="Biotin_lipoyl"/>
    <property type="match status" value="1"/>
</dbReference>
<dbReference type="SUPFAM" id="SSF51230">
    <property type="entry name" value="Single hybrid motif"/>
    <property type="match status" value="1"/>
</dbReference>
<dbReference type="PROSITE" id="PS00188">
    <property type="entry name" value="BIOTIN"/>
    <property type="match status" value="1"/>
</dbReference>
<dbReference type="PROSITE" id="PS50968">
    <property type="entry name" value="BIOTINYL_LIPOYL"/>
    <property type="match status" value="1"/>
</dbReference>
<reference key="1">
    <citation type="journal article" date="1993" name="J. Biol. Chem.">
        <title>Sequence of the sodium ion pump methylmalonyl-CoA decarboxylase from Veillonella parvula.</title>
        <authorList>
            <person name="Huder J.B."/>
            <person name="Dimroth P."/>
        </authorList>
    </citation>
    <scope>NUCLEOTIDE SEQUENCE [GENOMIC DNA]</scope>
    <scope>PROTEIN SEQUENCE OF 1-23</scope>
    <scope>SUBUNIT</scope>
</reference>
<reference key="2">
    <citation type="submission" date="2016-01" db="EMBL/GenBank/DDBJ databases">
        <authorList>
            <person name="Mitreva M."/>
            <person name="Pepin K.H."/>
            <person name="Mihindukulasuriya K.A."/>
            <person name="Fulton R."/>
            <person name="Fronick C."/>
            <person name="O'Laughlin M."/>
            <person name="Miner T."/>
            <person name="Herter B."/>
            <person name="Rosa B.A."/>
            <person name="Cordes M."/>
            <person name="Tomlinson C."/>
            <person name="Wollam A."/>
            <person name="Palsikar V.B."/>
            <person name="Mardis E.R."/>
            <person name="Wilson R.K."/>
        </authorList>
    </citation>
    <scope>NUCLEOTIDE SEQUENCE [LARGE SCALE GENOMIC DNA]</scope>
    <source>
        <strain>DNF00876</strain>
    </source>
</reference>
<reference key="3">
    <citation type="submission" date="2018-08" db="EMBL/GenBank/DDBJ databases">
        <title>A genome reference for cultivated species of the human gut microbiota.</title>
        <authorList>
            <person name="Zou Y."/>
            <person name="Xue W."/>
            <person name="Luo G."/>
        </authorList>
    </citation>
    <scope>NUCLEOTIDE SEQUENCE [LARGE SCALE GENOMIC DNA]</scope>
    <source>
        <strain>AF04-47</strain>
    </source>
</reference>
<reference key="4">
    <citation type="submission" date="2018-09" db="EMBL/GenBank/DDBJ databases">
        <title>Genome sequence of Veillonella parvula isolated from periodontal Korean patients.</title>
        <authorList>
            <person name="Lee J.-H."/>
            <person name="Moon J.-H."/>
            <person name="Shin S.-Y."/>
        </authorList>
    </citation>
    <scope>NUCLEOTIDE SEQUENCE [LARGE SCALE GENOMIC DNA]</scope>
    <source>
        <strain>KHUD_VP2</strain>
    </source>
</reference>
<reference key="5">
    <citation type="journal article" date="1982" name="Nature">
        <title>Conversion of the chemical energy of methylmalonyl-CoA decarboxylation into a Na+ gradient.</title>
        <authorList>
            <person name="Hilpert W."/>
            <person name="Dimroth P."/>
        </authorList>
    </citation>
    <scope>FUNCTION</scope>
    <scope>SUBCELLULAR LOCATION</scope>
</reference>
<reference key="6">
    <citation type="journal article" date="1983" name="Eur. J. Biochem.">
        <title>Purification and characterization of a new sodium-transport decarboxylase. Methylmalonyl-CoA decarboxylase from Veillonella alcalescens.</title>
        <authorList>
            <person name="Hilpert W."/>
            <person name="Dimroth P."/>
        </authorList>
    </citation>
    <scope>FUNCTION</scope>
    <scope>CATALYTIC ACTIVITY</scope>
    <scope>ACTIVITY REGULATION</scope>
    <scope>SUBCELLULAR LOCATION</scope>
    <source>
        <strain>ATCC 17745</strain>
    </source>
</reference>
<reference key="7">
    <citation type="journal article" date="1984" name="Eur. J. Biochem.">
        <title>Reconstitution of Na+ transport from purified methylmalonyl-CoA decarboxylase and phospholipid vesicles.</title>
        <authorList>
            <person name="Hilpert W."/>
            <person name="Dimroth P."/>
        </authorList>
    </citation>
    <scope>SUBCELLULAR LOCATION</scope>
    <source>
        <strain>ATCC 17745</strain>
    </source>
</reference>
<reference key="8">
    <citation type="journal article" date="1986" name="FEBS Lett.">
        <title>Morphological properties of proteoliposomes reconstituted with the Na+ pump methylmalonyl-CoA decarboxylase from Veillonella alcalescens.</title>
        <authorList>
            <person name="Rohde M."/>
            <person name="Dakena P."/>
            <person name="Mayer F."/>
            <person name="Dimroth P."/>
        </authorList>
    </citation>
    <scope>SUBCELLULAR LOCATION</scope>
</reference>
<reference key="9">
    <citation type="journal article" date="1987" name="FEBS Lett.">
        <title>Stereochemistry of the methylmalonyl-CoA decarboxylation reaction.</title>
        <authorList>
            <person name="Hoffmann A."/>
            <person name="Dimroth P."/>
        </authorList>
    </citation>
    <scope>FUNCTION</scope>
</reference>
<reference key="10">
    <citation type="journal article" date="1989" name="Eur. J. Biochem.">
        <title>The carboxyltransferase activity of the sodium-ion-translocating methylmalonyl-CoA decarboxylase of Veillonella alcalescens.</title>
        <authorList>
            <person name="Hoffmann A."/>
            <person name="Hilpert W."/>
            <person name="Dimroth P."/>
        </authorList>
    </citation>
    <scope>FUNCTION</scope>
    <scope>CATALYTIC ACTIVITY</scope>
    <source>
        <strain>ATCC 17745</strain>
    </source>
</reference>
<reference key="11">
    <citation type="journal article" date="1991" name="Eur. J. Biochem.">
        <title>On the mechanism of sodium ion translocation by methylmalonyl-CoA decarboxylase from Veillonella alcalescens.</title>
        <authorList>
            <person name="Hilpert W."/>
            <person name="Dimroth P."/>
        </authorList>
    </citation>
    <scope>FUNCTION</scope>
    <source>
        <strain>ATCC 17745</strain>
    </source>
</reference>
<reference key="12">
    <citation type="journal article" date="1995" name="J. Bacteriol.">
        <title>Expression of the sodium ion pump methylmalonyl-coenzyme A-decarboxylase from Veillonella parvula and of mutated enzyme specimens in Escherichia coli.</title>
        <authorList>
            <person name="Huder J.B."/>
            <person name="Dimroth P."/>
        </authorList>
    </citation>
    <scope>FUNCTION</scope>
    <scope>CATALYTIC ACTIVITY</scope>
    <scope>ACTIVITY REGULATION</scope>
    <scope>SUBUNIT</scope>
</reference>
<sequence>MKKFNVTVNGTAYDVEVNEVKAAAPAAAPKAAPAAAPAPKAAPAPAPAPAAAAAPVPAGAETVKAPMPGKILSVAVSAGQAVKKGETLLILEAMKMQNEIAAPHDAVVSEVRVSANQTVSTGDDMVVLG</sequence>
<feature type="chain" id="PRO_0000453535" description="Methylmalonyl-CoA decarboxylase subunit gamma">
    <location>
        <begin position="1"/>
        <end position="129"/>
    </location>
</feature>
<feature type="domain" description="Biotinyl-binding" evidence="1">
    <location>
        <begin position="51"/>
        <end position="129"/>
    </location>
</feature>
<feature type="region of interest" description="Disordered" evidence="2">
    <location>
        <begin position="24"/>
        <end position="58"/>
    </location>
</feature>
<feature type="compositionally biased region" description="Low complexity" evidence="2">
    <location>
        <begin position="24"/>
        <end position="39"/>
    </location>
</feature>
<feature type="compositionally biased region" description="Low complexity" evidence="2">
    <location>
        <begin position="49"/>
        <end position="58"/>
    </location>
</feature>
<feature type="modified residue" description="N6-biotinyllysine" evidence="1">
    <location>
        <position position="95"/>
    </location>
</feature>